<keyword id="KW-0027">Amidation</keyword>
<keyword id="KW-0903">Direct protein sequencing</keyword>
<keyword id="KW-0527">Neuropeptide</keyword>
<keyword id="KW-0964">Secreted</keyword>
<sequence>GRADNFLRL</sequence>
<reference evidence="5" key="1">
    <citation type="journal article" date="2012" name="Syst. Biol.">
        <title>Peptidomics-based phylogeny and biogeography of Mantophasmatodea (Hexapoda).</title>
        <authorList>
            <person name="Predel R."/>
            <person name="Neupert S."/>
            <person name="Huetteroth W."/>
            <person name="Kahnt J."/>
            <person name="Waidelich D."/>
            <person name="Roth S."/>
        </authorList>
    </citation>
    <scope>PROTEIN SEQUENCE</scope>
    <scope>AMIDATION AT LEU-9</scope>
    <source>
        <tissue evidence="3">Thoracic perisympathetic organs</tissue>
    </source>
</reference>
<evidence type="ECO:0000250" key="1">
    <source>
        <dbReference type="UniProtKB" id="P34405"/>
    </source>
</evidence>
<evidence type="ECO:0000255" key="2"/>
<evidence type="ECO:0000269" key="3">
    <source>
    </source>
</evidence>
<evidence type="ECO:0000303" key="4">
    <source>
    </source>
</evidence>
<evidence type="ECO:0000305" key="5"/>
<evidence type="ECO:0000305" key="6">
    <source>
    </source>
</evidence>
<dbReference type="GO" id="GO:0005576">
    <property type="term" value="C:extracellular region"/>
    <property type="evidence" value="ECO:0007669"/>
    <property type="project" value="UniProtKB-SubCell"/>
</dbReference>
<dbReference type="GO" id="GO:0007218">
    <property type="term" value="P:neuropeptide signaling pathway"/>
    <property type="evidence" value="ECO:0007669"/>
    <property type="project" value="UniProtKB-KW"/>
</dbReference>
<name>FAR6_STRNA</name>
<organism>
    <name type="scientific">Striatophasma naukluftense</name>
    <name type="common">Gladiator</name>
    <name type="synonym">Heel-walker</name>
    <dbReference type="NCBI Taxonomy" id="1041429"/>
    <lineage>
        <taxon>Eukaryota</taxon>
        <taxon>Metazoa</taxon>
        <taxon>Ecdysozoa</taxon>
        <taxon>Arthropoda</taxon>
        <taxon>Hexapoda</taxon>
        <taxon>Insecta</taxon>
        <taxon>Pterygota</taxon>
        <taxon>Neoptera</taxon>
        <taxon>Polyneoptera</taxon>
        <taxon>Mantophasmatodea</taxon>
        <taxon>Austrophasmatidae</taxon>
        <taxon>Striatophasma</taxon>
    </lineage>
</organism>
<feature type="peptide" id="PRO_0000420743" description="Extended FMRFamide-6" evidence="3">
    <location>
        <begin position="1"/>
        <end position="9"/>
    </location>
</feature>
<feature type="modified residue" description="Leucine amide" evidence="3">
    <location>
        <position position="9"/>
    </location>
</feature>
<feature type="unsure residue" description="L or I" evidence="3">
    <location>
        <position position="7"/>
    </location>
</feature>
<feature type="unsure residue" description="L or I" evidence="3">
    <location>
        <position position="9"/>
    </location>
</feature>
<comment type="function">
    <text evidence="1">FMRFamides and FMRFamide-like peptides are neuropeptides.</text>
</comment>
<comment type="subcellular location">
    <subcellularLocation>
        <location evidence="6">Secreted</location>
    </subcellularLocation>
</comment>
<comment type="similarity">
    <text evidence="2">Belongs to the FARP (FMRF amide related peptide) family.</text>
</comment>
<proteinExistence type="evidence at protein level"/>
<protein>
    <recommendedName>
        <fullName evidence="4">Extended FMRFamide-6</fullName>
        <shortName evidence="4">FMRFa-6</shortName>
    </recommendedName>
</protein>
<accession>B0M3A9</accession>